<keyword id="KW-0028">Amino-acid biosynthesis</keyword>
<keyword id="KW-0100">Branched-chain amino acid biosynthesis</keyword>
<keyword id="KW-0460">Magnesium</keyword>
<keyword id="KW-0479">Metal-binding</keyword>
<keyword id="KW-0521">NADP</keyword>
<keyword id="KW-0560">Oxidoreductase</keyword>
<name>ILVC_RALPJ</name>
<accession>B2U7S3</accession>
<comment type="function">
    <text evidence="1">Involved in the biosynthesis of branched-chain amino acids (BCAA). Catalyzes an alkyl-migration followed by a ketol-acid reduction of (S)-2-acetolactate (S2AL) to yield (R)-2,3-dihydroxy-isovalerate. In the isomerase reaction, S2AL is rearranged via a Mg-dependent methyl migration to produce 3-hydroxy-3-methyl-2-ketobutyrate (HMKB). In the reductase reaction, this 2-ketoacid undergoes a metal-dependent reduction by NADPH to yield (R)-2,3-dihydroxy-isovalerate.</text>
</comment>
<comment type="catalytic activity">
    <reaction evidence="1">
        <text>(2R)-2,3-dihydroxy-3-methylbutanoate + NADP(+) = (2S)-2-acetolactate + NADPH + H(+)</text>
        <dbReference type="Rhea" id="RHEA:22068"/>
        <dbReference type="ChEBI" id="CHEBI:15378"/>
        <dbReference type="ChEBI" id="CHEBI:49072"/>
        <dbReference type="ChEBI" id="CHEBI:57783"/>
        <dbReference type="ChEBI" id="CHEBI:58349"/>
        <dbReference type="ChEBI" id="CHEBI:58476"/>
        <dbReference type="EC" id="1.1.1.86"/>
    </reaction>
</comment>
<comment type="catalytic activity">
    <reaction evidence="1">
        <text>(2R,3R)-2,3-dihydroxy-3-methylpentanoate + NADP(+) = (S)-2-ethyl-2-hydroxy-3-oxobutanoate + NADPH + H(+)</text>
        <dbReference type="Rhea" id="RHEA:13493"/>
        <dbReference type="ChEBI" id="CHEBI:15378"/>
        <dbReference type="ChEBI" id="CHEBI:49256"/>
        <dbReference type="ChEBI" id="CHEBI:49258"/>
        <dbReference type="ChEBI" id="CHEBI:57783"/>
        <dbReference type="ChEBI" id="CHEBI:58349"/>
        <dbReference type="EC" id="1.1.1.86"/>
    </reaction>
</comment>
<comment type="cofactor">
    <cofactor evidence="1">
        <name>Mg(2+)</name>
        <dbReference type="ChEBI" id="CHEBI:18420"/>
    </cofactor>
    <text evidence="1">Binds 2 magnesium ions per subunit.</text>
</comment>
<comment type="pathway">
    <text evidence="1">Amino-acid biosynthesis; L-isoleucine biosynthesis; L-isoleucine from 2-oxobutanoate: step 2/4.</text>
</comment>
<comment type="pathway">
    <text evidence="1">Amino-acid biosynthesis; L-valine biosynthesis; L-valine from pyruvate: step 2/4.</text>
</comment>
<comment type="similarity">
    <text evidence="1">Belongs to the ketol-acid reductoisomerase family.</text>
</comment>
<organism>
    <name type="scientific">Ralstonia pickettii (strain 12J)</name>
    <dbReference type="NCBI Taxonomy" id="402626"/>
    <lineage>
        <taxon>Bacteria</taxon>
        <taxon>Pseudomonadati</taxon>
        <taxon>Pseudomonadota</taxon>
        <taxon>Betaproteobacteria</taxon>
        <taxon>Burkholderiales</taxon>
        <taxon>Burkholderiaceae</taxon>
        <taxon>Ralstonia</taxon>
    </lineage>
</organism>
<gene>
    <name evidence="1" type="primary">ilvC</name>
    <name type="ordered locus">Rpic_2226</name>
</gene>
<dbReference type="EC" id="1.1.1.86" evidence="1"/>
<dbReference type="EMBL" id="CP001068">
    <property type="protein sequence ID" value="ACD27360.1"/>
    <property type="molecule type" value="Genomic_DNA"/>
</dbReference>
<dbReference type="SMR" id="B2U7S3"/>
<dbReference type="STRING" id="402626.Rpic_2226"/>
<dbReference type="KEGG" id="rpi:Rpic_2226"/>
<dbReference type="eggNOG" id="COG0059">
    <property type="taxonomic scope" value="Bacteria"/>
</dbReference>
<dbReference type="HOGENOM" id="CLU_033821_0_1_4"/>
<dbReference type="UniPathway" id="UPA00047">
    <property type="reaction ID" value="UER00056"/>
</dbReference>
<dbReference type="UniPathway" id="UPA00049">
    <property type="reaction ID" value="UER00060"/>
</dbReference>
<dbReference type="GO" id="GO:0005829">
    <property type="term" value="C:cytosol"/>
    <property type="evidence" value="ECO:0007669"/>
    <property type="project" value="TreeGrafter"/>
</dbReference>
<dbReference type="GO" id="GO:0004455">
    <property type="term" value="F:ketol-acid reductoisomerase activity"/>
    <property type="evidence" value="ECO:0007669"/>
    <property type="project" value="UniProtKB-UniRule"/>
</dbReference>
<dbReference type="GO" id="GO:0000287">
    <property type="term" value="F:magnesium ion binding"/>
    <property type="evidence" value="ECO:0007669"/>
    <property type="project" value="UniProtKB-UniRule"/>
</dbReference>
<dbReference type="GO" id="GO:0050661">
    <property type="term" value="F:NADP binding"/>
    <property type="evidence" value="ECO:0007669"/>
    <property type="project" value="InterPro"/>
</dbReference>
<dbReference type="GO" id="GO:0009097">
    <property type="term" value="P:isoleucine biosynthetic process"/>
    <property type="evidence" value="ECO:0007669"/>
    <property type="project" value="UniProtKB-UniRule"/>
</dbReference>
<dbReference type="GO" id="GO:0009099">
    <property type="term" value="P:L-valine biosynthetic process"/>
    <property type="evidence" value="ECO:0007669"/>
    <property type="project" value="UniProtKB-UniRule"/>
</dbReference>
<dbReference type="FunFam" id="3.40.50.720:FF:000023">
    <property type="entry name" value="Ketol-acid reductoisomerase (NADP(+))"/>
    <property type="match status" value="1"/>
</dbReference>
<dbReference type="Gene3D" id="6.10.240.10">
    <property type="match status" value="1"/>
</dbReference>
<dbReference type="Gene3D" id="3.40.50.720">
    <property type="entry name" value="NAD(P)-binding Rossmann-like Domain"/>
    <property type="match status" value="1"/>
</dbReference>
<dbReference type="HAMAP" id="MF_00435">
    <property type="entry name" value="IlvC"/>
    <property type="match status" value="1"/>
</dbReference>
<dbReference type="InterPro" id="IPR008927">
    <property type="entry name" value="6-PGluconate_DH-like_C_sf"/>
</dbReference>
<dbReference type="InterPro" id="IPR013023">
    <property type="entry name" value="KARI"/>
</dbReference>
<dbReference type="InterPro" id="IPR000506">
    <property type="entry name" value="KARI_C"/>
</dbReference>
<dbReference type="InterPro" id="IPR013116">
    <property type="entry name" value="KARI_N"/>
</dbReference>
<dbReference type="InterPro" id="IPR014359">
    <property type="entry name" value="KARI_prok"/>
</dbReference>
<dbReference type="InterPro" id="IPR036291">
    <property type="entry name" value="NAD(P)-bd_dom_sf"/>
</dbReference>
<dbReference type="NCBIfam" id="TIGR00465">
    <property type="entry name" value="ilvC"/>
    <property type="match status" value="1"/>
</dbReference>
<dbReference type="NCBIfam" id="NF004017">
    <property type="entry name" value="PRK05479.1"/>
    <property type="match status" value="1"/>
</dbReference>
<dbReference type="NCBIfam" id="NF009940">
    <property type="entry name" value="PRK13403.1"/>
    <property type="match status" value="1"/>
</dbReference>
<dbReference type="PANTHER" id="PTHR21371">
    <property type="entry name" value="KETOL-ACID REDUCTOISOMERASE, MITOCHONDRIAL"/>
    <property type="match status" value="1"/>
</dbReference>
<dbReference type="PANTHER" id="PTHR21371:SF1">
    <property type="entry name" value="KETOL-ACID REDUCTOISOMERASE, MITOCHONDRIAL"/>
    <property type="match status" value="1"/>
</dbReference>
<dbReference type="Pfam" id="PF01450">
    <property type="entry name" value="KARI_C"/>
    <property type="match status" value="1"/>
</dbReference>
<dbReference type="Pfam" id="PF07991">
    <property type="entry name" value="KARI_N"/>
    <property type="match status" value="1"/>
</dbReference>
<dbReference type="PIRSF" id="PIRSF000116">
    <property type="entry name" value="IlvC_gammaproteo"/>
    <property type="match status" value="1"/>
</dbReference>
<dbReference type="SUPFAM" id="SSF48179">
    <property type="entry name" value="6-phosphogluconate dehydrogenase C-terminal domain-like"/>
    <property type="match status" value="1"/>
</dbReference>
<dbReference type="SUPFAM" id="SSF51735">
    <property type="entry name" value="NAD(P)-binding Rossmann-fold domains"/>
    <property type="match status" value="1"/>
</dbReference>
<dbReference type="PROSITE" id="PS51851">
    <property type="entry name" value="KARI_C"/>
    <property type="match status" value="1"/>
</dbReference>
<dbReference type="PROSITE" id="PS51850">
    <property type="entry name" value="KARI_N"/>
    <property type="match status" value="1"/>
</dbReference>
<feature type="chain" id="PRO_1000124326" description="Ketol-acid reductoisomerase (NADP(+))">
    <location>
        <begin position="1"/>
        <end position="338"/>
    </location>
</feature>
<feature type="domain" description="KARI N-terminal Rossmann" evidence="2">
    <location>
        <begin position="1"/>
        <end position="181"/>
    </location>
</feature>
<feature type="domain" description="KARI C-terminal knotted" evidence="3">
    <location>
        <begin position="182"/>
        <end position="327"/>
    </location>
</feature>
<feature type="active site" evidence="1">
    <location>
        <position position="107"/>
    </location>
</feature>
<feature type="binding site" evidence="1">
    <location>
        <begin position="24"/>
        <end position="27"/>
    </location>
    <ligand>
        <name>NADP(+)</name>
        <dbReference type="ChEBI" id="CHEBI:58349"/>
    </ligand>
</feature>
<feature type="binding site" evidence="1">
    <location>
        <position position="47"/>
    </location>
    <ligand>
        <name>NADP(+)</name>
        <dbReference type="ChEBI" id="CHEBI:58349"/>
    </ligand>
</feature>
<feature type="binding site" evidence="1">
    <location>
        <position position="52"/>
    </location>
    <ligand>
        <name>NADP(+)</name>
        <dbReference type="ChEBI" id="CHEBI:58349"/>
    </ligand>
</feature>
<feature type="binding site" evidence="1">
    <location>
        <position position="133"/>
    </location>
    <ligand>
        <name>NADP(+)</name>
        <dbReference type="ChEBI" id="CHEBI:58349"/>
    </ligand>
</feature>
<feature type="binding site" evidence="1">
    <location>
        <position position="190"/>
    </location>
    <ligand>
        <name>Mg(2+)</name>
        <dbReference type="ChEBI" id="CHEBI:18420"/>
        <label>1</label>
    </ligand>
</feature>
<feature type="binding site" evidence="1">
    <location>
        <position position="190"/>
    </location>
    <ligand>
        <name>Mg(2+)</name>
        <dbReference type="ChEBI" id="CHEBI:18420"/>
        <label>2</label>
    </ligand>
</feature>
<feature type="binding site" evidence="1">
    <location>
        <position position="194"/>
    </location>
    <ligand>
        <name>Mg(2+)</name>
        <dbReference type="ChEBI" id="CHEBI:18420"/>
        <label>1</label>
    </ligand>
</feature>
<feature type="binding site" evidence="1">
    <location>
        <position position="226"/>
    </location>
    <ligand>
        <name>Mg(2+)</name>
        <dbReference type="ChEBI" id="CHEBI:18420"/>
        <label>2</label>
    </ligand>
</feature>
<feature type="binding site" evidence="1">
    <location>
        <position position="230"/>
    </location>
    <ligand>
        <name>Mg(2+)</name>
        <dbReference type="ChEBI" id="CHEBI:18420"/>
        <label>2</label>
    </ligand>
</feature>
<feature type="binding site" evidence="1">
    <location>
        <position position="251"/>
    </location>
    <ligand>
        <name>substrate</name>
    </ligand>
</feature>
<protein>
    <recommendedName>
        <fullName evidence="1">Ketol-acid reductoisomerase (NADP(+))</fullName>
        <shortName evidence="1">KARI</shortName>
        <ecNumber evidence="1">1.1.1.86</ecNumber>
    </recommendedName>
    <alternativeName>
        <fullName evidence="1">Acetohydroxy-acid isomeroreductase</fullName>
        <shortName evidence="1">AHIR</shortName>
    </alternativeName>
    <alternativeName>
        <fullName evidence="1">Alpha-keto-beta-hydroxylacyl reductoisomerase</fullName>
    </alternativeName>
    <alternativeName>
        <fullName evidence="1">Ketol-acid reductoisomerase type 1</fullName>
    </alternativeName>
    <alternativeName>
        <fullName evidence="1">Ketol-acid reductoisomerase type I</fullName>
    </alternativeName>
</protein>
<evidence type="ECO:0000255" key="1">
    <source>
        <dbReference type="HAMAP-Rule" id="MF_00435"/>
    </source>
</evidence>
<evidence type="ECO:0000255" key="2">
    <source>
        <dbReference type="PROSITE-ProRule" id="PRU01197"/>
    </source>
</evidence>
<evidence type="ECO:0000255" key="3">
    <source>
        <dbReference type="PROSITE-ProRule" id="PRU01198"/>
    </source>
</evidence>
<proteinExistence type="inferred from homology"/>
<reference key="1">
    <citation type="submission" date="2008-05" db="EMBL/GenBank/DDBJ databases">
        <title>Complete sequence of chromosome 1 of Ralstonia pickettii 12J.</title>
        <authorList>
            <person name="Lucas S."/>
            <person name="Copeland A."/>
            <person name="Lapidus A."/>
            <person name="Glavina del Rio T."/>
            <person name="Dalin E."/>
            <person name="Tice H."/>
            <person name="Bruce D."/>
            <person name="Goodwin L."/>
            <person name="Pitluck S."/>
            <person name="Meincke L."/>
            <person name="Brettin T."/>
            <person name="Detter J.C."/>
            <person name="Han C."/>
            <person name="Kuske C.R."/>
            <person name="Schmutz J."/>
            <person name="Larimer F."/>
            <person name="Land M."/>
            <person name="Hauser L."/>
            <person name="Kyrpides N."/>
            <person name="Mikhailova N."/>
            <person name="Marsh T."/>
            <person name="Richardson P."/>
        </authorList>
    </citation>
    <scope>NUCLEOTIDE SEQUENCE [LARGE SCALE GENOMIC DNA]</scope>
    <source>
        <strain>12J</strain>
    </source>
</reference>
<sequence length="338" mass="36720">MKVFYDKDADLSLIKGKNVTIIGYGSQGHAHALNLNDSGVKVTVGLRKNGASWNKAVNAGLQVKEVAEAVKEADVVMILLPDEQIADVYKNEVHGNIKQGAALAFAHGFNVHYGAVIPRADLDVIMIAPKAPGHTVRGTYTQGGGVPHLIAVHQDKSGAARDIALSYATANGGGRAGIIETNFREETETDLFGEQAVLCGGTVELIKAGFETLVEAGYAPEMAYFECLHELKLIVDLIYEGGIANMNYSISNNAEYGEYVTGPRVVTEETKKAMKQCLKDIQTGEYAKSFLLEYKAGQPTLISRRRLTEEHQIEQVGAKLRAMMPWIAKNKLVDQTKN</sequence>